<name>Y448_LYSSC</name>
<dbReference type="EMBL" id="CP000817">
    <property type="protein sequence ID" value="ACA38075.1"/>
    <property type="molecule type" value="Genomic_DNA"/>
</dbReference>
<dbReference type="SMR" id="B1HVQ6"/>
<dbReference type="EnsemblBacteria" id="ACA38075">
    <property type="protein sequence ID" value="ACA38075"/>
    <property type="gene ID" value="Bsph_0448"/>
</dbReference>
<dbReference type="KEGG" id="lsp:Bsph_0448"/>
<dbReference type="HOGENOM" id="CLU_059558_0_0_9"/>
<dbReference type="Proteomes" id="UP000002164">
    <property type="component" value="Chromosome"/>
</dbReference>
<dbReference type="GO" id="GO:0005524">
    <property type="term" value="F:ATP binding"/>
    <property type="evidence" value="ECO:0007669"/>
    <property type="project" value="UniProtKB-UniRule"/>
</dbReference>
<dbReference type="GO" id="GO:0005525">
    <property type="term" value="F:GTP binding"/>
    <property type="evidence" value="ECO:0007669"/>
    <property type="project" value="UniProtKB-UniRule"/>
</dbReference>
<dbReference type="Gene3D" id="3.40.50.300">
    <property type="entry name" value="P-loop containing nucleotide triphosphate hydrolases"/>
    <property type="match status" value="1"/>
</dbReference>
<dbReference type="HAMAP" id="MF_00636">
    <property type="entry name" value="RapZ_like"/>
    <property type="match status" value="1"/>
</dbReference>
<dbReference type="InterPro" id="IPR027417">
    <property type="entry name" value="P-loop_NTPase"/>
</dbReference>
<dbReference type="InterPro" id="IPR005337">
    <property type="entry name" value="RapZ-like"/>
</dbReference>
<dbReference type="InterPro" id="IPR053930">
    <property type="entry name" value="RapZ-like_N"/>
</dbReference>
<dbReference type="InterPro" id="IPR053931">
    <property type="entry name" value="RapZ_C"/>
</dbReference>
<dbReference type="NCBIfam" id="NF003828">
    <property type="entry name" value="PRK05416.1"/>
    <property type="match status" value="1"/>
</dbReference>
<dbReference type="PANTHER" id="PTHR30448">
    <property type="entry name" value="RNASE ADAPTER PROTEIN RAPZ"/>
    <property type="match status" value="1"/>
</dbReference>
<dbReference type="PANTHER" id="PTHR30448:SF0">
    <property type="entry name" value="RNASE ADAPTER PROTEIN RAPZ"/>
    <property type="match status" value="1"/>
</dbReference>
<dbReference type="Pfam" id="PF22740">
    <property type="entry name" value="PapZ_C"/>
    <property type="match status" value="1"/>
</dbReference>
<dbReference type="Pfam" id="PF03668">
    <property type="entry name" value="RapZ-like_N"/>
    <property type="match status" value="1"/>
</dbReference>
<dbReference type="PIRSF" id="PIRSF005052">
    <property type="entry name" value="P-loopkin"/>
    <property type="match status" value="1"/>
</dbReference>
<dbReference type="SUPFAM" id="SSF52540">
    <property type="entry name" value="P-loop containing nucleoside triphosphate hydrolases"/>
    <property type="match status" value="1"/>
</dbReference>
<feature type="chain" id="PRO_0000383261" description="Nucleotide-binding protein Bsph_0448">
    <location>
        <begin position="1"/>
        <end position="297"/>
    </location>
</feature>
<feature type="binding site" evidence="1">
    <location>
        <begin position="19"/>
        <end position="26"/>
    </location>
    <ligand>
        <name>ATP</name>
        <dbReference type="ChEBI" id="CHEBI:30616"/>
    </ligand>
</feature>
<feature type="binding site" evidence="1">
    <location>
        <begin position="70"/>
        <end position="73"/>
    </location>
    <ligand>
        <name>GTP</name>
        <dbReference type="ChEBI" id="CHEBI:37565"/>
    </ligand>
</feature>
<sequence>MTVVVEGQQRTHELVIITGMSGAGKTVAIQSFEDLGYYCIDNLPPALLTTFLTLLRDSGKNSTRIAAVMDMRGGNFFDALIGALDHILKEGDIVARILFLDADDATLVRRYKETRRAHPLAVSGLPLDGIKQERALLSEVKGRANFVYNTSNMKPKQLREKIVKEFASEADTIFTVNIMSFGFKHGMPIDADLVFDVRFLKNPYYVEELRPKTGLQTEVSSYVLALEDTQILIQKLTDLFDFMIPLYRQEGKSQLVIAFGCTGGQHRSVTLAEFFGAYLASKENTVITHRDINRRKE</sequence>
<keyword id="KW-0067">ATP-binding</keyword>
<keyword id="KW-0342">GTP-binding</keyword>
<keyword id="KW-0547">Nucleotide-binding</keyword>
<comment type="function">
    <text evidence="1">Displays ATPase and GTPase activities.</text>
</comment>
<comment type="similarity">
    <text evidence="1">Belongs to the RapZ-like family.</text>
</comment>
<evidence type="ECO:0000255" key="1">
    <source>
        <dbReference type="HAMAP-Rule" id="MF_00636"/>
    </source>
</evidence>
<organism>
    <name type="scientific">Lysinibacillus sphaericus (strain C3-41)</name>
    <dbReference type="NCBI Taxonomy" id="444177"/>
    <lineage>
        <taxon>Bacteria</taxon>
        <taxon>Bacillati</taxon>
        <taxon>Bacillota</taxon>
        <taxon>Bacilli</taxon>
        <taxon>Bacillales</taxon>
        <taxon>Bacillaceae</taxon>
        <taxon>Lysinibacillus</taxon>
    </lineage>
</organism>
<accession>B1HVQ6</accession>
<reference key="1">
    <citation type="journal article" date="2008" name="J. Bacteriol.">
        <title>Complete genome sequence of the mosquitocidal bacterium Bacillus sphaericus C3-41 and comparison with those of closely related Bacillus species.</title>
        <authorList>
            <person name="Hu X."/>
            <person name="Fan W."/>
            <person name="Han B."/>
            <person name="Liu H."/>
            <person name="Zheng D."/>
            <person name="Li Q."/>
            <person name="Dong W."/>
            <person name="Yan J."/>
            <person name="Gao M."/>
            <person name="Berry C."/>
            <person name="Yuan Z."/>
        </authorList>
    </citation>
    <scope>NUCLEOTIDE SEQUENCE [LARGE SCALE GENOMIC DNA]</scope>
    <source>
        <strain>C3-41</strain>
    </source>
</reference>
<proteinExistence type="inferred from homology"/>
<protein>
    <recommendedName>
        <fullName evidence="1">Nucleotide-binding protein Bsph_0448</fullName>
    </recommendedName>
</protein>
<gene>
    <name type="ordered locus">Bsph_0448</name>
</gene>